<feature type="chain" id="PRO_1000135918" description="2,3-bisphosphoglycerate-dependent phosphoglycerate mutase">
    <location>
        <begin position="1"/>
        <end position="245"/>
    </location>
</feature>
<feature type="active site" description="Tele-phosphohistidine intermediate" evidence="1">
    <location>
        <position position="9"/>
    </location>
</feature>
<feature type="active site" description="Proton donor/acceptor" evidence="1">
    <location>
        <position position="87"/>
    </location>
</feature>
<feature type="binding site" evidence="1">
    <location>
        <begin position="8"/>
        <end position="15"/>
    </location>
    <ligand>
        <name>substrate</name>
    </ligand>
</feature>
<feature type="binding site" evidence="1">
    <location>
        <begin position="21"/>
        <end position="22"/>
    </location>
    <ligand>
        <name>substrate</name>
    </ligand>
</feature>
<feature type="binding site" evidence="1">
    <location>
        <position position="60"/>
    </location>
    <ligand>
        <name>substrate</name>
    </ligand>
</feature>
<feature type="binding site" evidence="1">
    <location>
        <begin position="87"/>
        <end position="90"/>
    </location>
    <ligand>
        <name>substrate</name>
    </ligand>
</feature>
<feature type="binding site" evidence="1">
    <location>
        <position position="98"/>
    </location>
    <ligand>
        <name>substrate</name>
    </ligand>
</feature>
<feature type="binding site" evidence="1">
    <location>
        <begin position="114"/>
        <end position="115"/>
    </location>
    <ligand>
        <name>substrate</name>
    </ligand>
</feature>
<feature type="binding site" evidence="1">
    <location>
        <begin position="183"/>
        <end position="184"/>
    </location>
    <ligand>
        <name>substrate</name>
    </ligand>
</feature>
<feature type="site" description="Transition state stabilizer" evidence="1">
    <location>
        <position position="182"/>
    </location>
</feature>
<gene>
    <name evidence="1" type="primary">gpmA</name>
    <name type="ordered locus">BCAH187_A2583</name>
</gene>
<organism>
    <name type="scientific">Bacillus cereus (strain AH187)</name>
    <dbReference type="NCBI Taxonomy" id="405534"/>
    <lineage>
        <taxon>Bacteria</taxon>
        <taxon>Bacillati</taxon>
        <taxon>Bacillota</taxon>
        <taxon>Bacilli</taxon>
        <taxon>Bacillales</taxon>
        <taxon>Bacillaceae</taxon>
        <taxon>Bacillus</taxon>
        <taxon>Bacillus cereus group</taxon>
    </lineage>
</organism>
<name>GPMA_BACC7</name>
<proteinExistence type="inferred from homology"/>
<keyword id="KW-0312">Gluconeogenesis</keyword>
<keyword id="KW-0324">Glycolysis</keyword>
<keyword id="KW-0413">Isomerase</keyword>
<evidence type="ECO:0000255" key="1">
    <source>
        <dbReference type="HAMAP-Rule" id="MF_01039"/>
    </source>
</evidence>
<accession>B7HS46</accession>
<comment type="function">
    <text evidence="1">Catalyzes the interconversion of 2-phosphoglycerate and 3-phosphoglycerate.</text>
</comment>
<comment type="catalytic activity">
    <reaction evidence="1">
        <text>(2R)-2-phosphoglycerate = (2R)-3-phosphoglycerate</text>
        <dbReference type="Rhea" id="RHEA:15901"/>
        <dbReference type="ChEBI" id="CHEBI:58272"/>
        <dbReference type="ChEBI" id="CHEBI:58289"/>
        <dbReference type="EC" id="5.4.2.11"/>
    </reaction>
</comment>
<comment type="pathway">
    <text evidence="1">Carbohydrate degradation; glycolysis; pyruvate from D-glyceraldehyde 3-phosphate: step 3/5.</text>
</comment>
<comment type="similarity">
    <text evidence="1">Belongs to the phosphoglycerate mutase family. BPG-dependent PGAM subfamily.</text>
</comment>
<dbReference type="EC" id="5.4.2.11" evidence="1"/>
<dbReference type="EMBL" id="CP001177">
    <property type="protein sequence ID" value="ACJ80395.1"/>
    <property type="molecule type" value="Genomic_DNA"/>
</dbReference>
<dbReference type="SMR" id="B7HS46"/>
<dbReference type="KEGG" id="bcr:BCAH187_A2583"/>
<dbReference type="HOGENOM" id="CLU_033323_1_1_9"/>
<dbReference type="UniPathway" id="UPA00109">
    <property type="reaction ID" value="UER00186"/>
</dbReference>
<dbReference type="Proteomes" id="UP000002214">
    <property type="component" value="Chromosome"/>
</dbReference>
<dbReference type="GO" id="GO:0004619">
    <property type="term" value="F:phosphoglycerate mutase activity"/>
    <property type="evidence" value="ECO:0007669"/>
    <property type="project" value="UniProtKB-EC"/>
</dbReference>
<dbReference type="GO" id="GO:0006094">
    <property type="term" value="P:gluconeogenesis"/>
    <property type="evidence" value="ECO:0007669"/>
    <property type="project" value="UniProtKB-UniRule"/>
</dbReference>
<dbReference type="GO" id="GO:0006096">
    <property type="term" value="P:glycolytic process"/>
    <property type="evidence" value="ECO:0007669"/>
    <property type="project" value="UniProtKB-UniRule"/>
</dbReference>
<dbReference type="CDD" id="cd07067">
    <property type="entry name" value="HP_PGM_like"/>
    <property type="match status" value="1"/>
</dbReference>
<dbReference type="FunFam" id="3.40.50.1240:FF:000003">
    <property type="entry name" value="2,3-bisphosphoglycerate-dependent phosphoglycerate mutase"/>
    <property type="match status" value="1"/>
</dbReference>
<dbReference type="Gene3D" id="3.40.50.1240">
    <property type="entry name" value="Phosphoglycerate mutase-like"/>
    <property type="match status" value="1"/>
</dbReference>
<dbReference type="HAMAP" id="MF_01039">
    <property type="entry name" value="PGAM_GpmA"/>
    <property type="match status" value="1"/>
</dbReference>
<dbReference type="InterPro" id="IPR013078">
    <property type="entry name" value="His_Pase_superF_clade-1"/>
</dbReference>
<dbReference type="InterPro" id="IPR029033">
    <property type="entry name" value="His_PPase_superfam"/>
</dbReference>
<dbReference type="InterPro" id="IPR001345">
    <property type="entry name" value="PG/BPGM_mutase_AS"/>
</dbReference>
<dbReference type="InterPro" id="IPR005952">
    <property type="entry name" value="Phosphogly_mut1"/>
</dbReference>
<dbReference type="NCBIfam" id="TIGR01258">
    <property type="entry name" value="pgm_1"/>
    <property type="match status" value="1"/>
</dbReference>
<dbReference type="NCBIfam" id="NF010713">
    <property type="entry name" value="PRK14115.1"/>
    <property type="match status" value="1"/>
</dbReference>
<dbReference type="PANTHER" id="PTHR11931">
    <property type="entry name" value="PHOSPHOGLYCERATE MUTASE"/>
    <property type="match status" value="1"/>
</dbReference>
<dbReference type="Pfam" id="PF00300">
    <property type="entry name" value="His_Phos_1"/>
    <property type="match status" value="1"/>
</dbReference>
<dbReference type="PIRSF" id="PIRSF000709">
    <property type="entry name" value="6PFK_2-Ptase"/>
    <property type="match status" value="1"/>
</dbReference>
<dbReference type="SMART" id="SM00855">
    <property type="entry name" value="PGAM"/>
    <property type="match status" value="1"/>
</dbReference>
<dbReference type="SUPFAM" id="SSF53254">
    <property type="entry name" value="Phosphoglycerate mutase-like"/>
    <property type="match status" value="1"/>
</dbReference>
<dbReference type="PROSITE" id="PS00175">
    <property type="entry name" value="PG_MUTASE"/>
    <property type="match status" value="1"/>
</dbReference>
<protein>
    <recommendedName>
        <fullName evidence="1">2,3-bisphosphoglycerate-dependent phosphoglycerate mutase</fullName>
        <shortName evidence="1">BPG-dependent PGAM</shortName>
        <shortName evidence="1">PGAM</shortName>
        <shortName evidence="1">Phosphoglyceromutase</shortName>
        <shortName evidence="1">dPGM</shortName>
        <ecNumber evidence="1">5.4.2.11</ecNumber>
    </recommendedName>
</protein>
<reference key="1">
    <citation type="submission" date="2008-10" db="EMBL/GenBank/DDBJ databases">
        <title>Genome sequence of Bacillus cereus AH187.</title>
        <authorList>
            <person name="Dodson R.J."/>
            <person name="Durkin A.S."/>
            <person name="Rosovitz M.J."/>
            <person name="Rasko D.A."/>
            <person name="Kolsto A.B."/>
            <person name="Okstad O.A."/>
            <person name="Ravel J."/>
            <person name="Sutton G."/>
        </authorList>
    </citation>
    <scope>NUCLEOTIDE SEQUENCE [LARGE SCALE GENOMIC DNA]</scope>
    <source>
        <strain>AH187</strain>
    </source>
</reference>
<sequence length="245" mass="28309">MIKLVLIRHGQSLWNLENRFTGWTDVDLSEKGLSEAREAGAILKKNGYTFDVAYTSVLKRAIRTLWIVLHEMDLAWVPVHKCWKLNERHYGALQGLNKDETAQKYGEEQVHIWRRSIDVRPPALTEDDPRYEMNDPRYKALKKGEFPLTECLVDTEKRVLAYWHSEIAPKLKNGNKVIISSHGNTIRSLVKYLDNLSSDGVVSLNIPTSIPLVYELDENLRPIRHYYLSMDGEVPEGEIPKHITF</sequence>